<name>IGMT5_ARATH</name>
<organism>
    <name type="scientific">Arabidopsis thaliana</name>
    <name type="common">Mouse-ear cress</name>
    <dbReference type="NCBI Taxonomy" id="3702"/>
    <lineage>
        <taxon>Eukaryota</taxon>
        <taxon>Viridiplantae</taxon>
        <taxon>Streptophyta</taxon>
        <taxon>Embryophyta</taxon>
        <taxon>Tracheophyta</taxon>
        <taxon>Spermatophyta</taxon>
        <taxon>Magnoliopsida</taxon>
        <taxon>eudicotyledons</taxon>
        <taxon>Gunneridae</taxon>
        <taxon>Pentapetalae</taxon>
        <taxon>rosids</taxon>
        <taxon>malvids</taxon>
        <taxon>Brassicales</taxon>
        <taxon>Brassicaceae</taxon>
        <taxon>Camelineae</taxon>
        <taxon>Arabidopsis</taxon>
    </lineage>
</organism>
<keyword id="KW-0489">Methyltransferase</keyword>
<keyword id="KW-1185">Reference proteome</keyword>
<keyword id="KW-0949">S-adenosyl-L-methionine</keyword>
<keyword id="KW-0808">Transferase</keyword>
<gene>
    <name evidence="4" type="primary">IGMT5</name>
    <name evidence="5" type="ordered locus">At1g76790</name>
    <name evidence="6" type="ORF">F28O16.16</name>
</gene>
<comment type="function">
    <text evidence="2">Involved in indole glucosinolate biosynthesis. Catalyzes methoxylation reactions of the glucosinolate indole ring. Converts the hydroxy intermediates 4-hydroxy-indol-3-yl-methylglucosinolate (4OH-I3M) and 1-hydroxy-indol-3-yl-methylglucosinolate (1OH-I3M) to 4-methoxy-indol-3-yl-methylglucosinolate (4MO-I3M) and 1-methoxy-indol-3-yl-methylglucosinolate, respectively.</text>
</comment>
<comment type="pathway">
    <text evidence="4">Secondary metabolite biosynthesis.</text>
</comment>
<comment type="similarity">
    <text evidence="3">Belongs to the class I-like SAM-binding methyltransferase superfamily. Cation-independent O-methyltransferase family.</text>
</comment>
<comment type="sequence caution" evidence="4">
    <conflict type="erroneous initiation">
        <sequence resource="EMBL-CDS" id="AAM66988"/>
    </conflict>
    <text>Truncated N-terminus.</text>
</comment>
<proteinExistence type="evidence at transcript level"/>
<accession>Q9SRD4</accession>
<accession>Q8L931</accession>
<sequence length="367" mass="40222">MGHLIPQTGDEETELGLAAVRLANCAAFPMVFKAAIELGVIDTLYLAARDDVTGSSSFLTPSEIAIRLPTKPSNPEAPALLDRILRLLASYSMVKCQIIDGNRVYKAEPICRYFLKDNVDEELGTLASQLIVTLDTVFLNTWGELKNVVLEGGVAFGRANGGLKLFDYISKDERLSKLFNRTGFSVAVLKKILQVYSGFEGVNVLVDVGGGVGDTLGFVTSKYPNIKGINFDLTCALTQAPSYPNVEHVAGDMFVDVPKGDAILLKRILHDWTDEDCEKILKNCWKALPENGKVIVMEVVTPDEADNRDVISNIAFDMDLLMLTQLSGGKERSRAEYVAMAANSGFPRCNFVCSAYHLWVIELTKQA</sequence>
<dbReference type="EC" id="2.1.1.-" evidence="4"/>
<dbReference type="EMBL" id="AC010718">
    <property type="protein sequence ID" value="AAF04440.1"/>
    <property type="molecule type" value="Genomic_DNA"/>
</dbReference>
<dbReference type="EMBL" id="CP002684">
    <property type="protein sequence ID" value="AEE35889.1"/>
    <property type="molecule type" value="Genomic_DNA"/>
</dbReference>
<dbReference type="EMBL" id="BT002952">
    <property type="protein sequence ID" value="AAO22765.1"/>
    <property type="molecule type" value="mRNA"/>
</dbReference>
<dbReference type="EMBL" id="BT004388">
    <property type="protein sequence ID" value="AAO42382.1"/>
    <property type="molecule type" value="mRNA"/>
</dbReference>
<dbReference type="EMBL" id="AY088666">
    <property type="protein sequence ID" value="AAM66988.1"/>
    <property type="status" value="ALT_INIT"/>
    <property type="molecule type" value="mRNA"/>
</dbReference>
<dbReference type="PIR" id="E96796">
    <property type="entry name" value="E96796"/>
</dbReference>
<dbReference type="RefSeq" id="NP_177805.1">
    <property type="nucleotide sequence ID" value="NM_106329.3"/>
</dbReference>
<dbReference type="SMR" id="Q9SRD4"/>
<dbReference type="FunCoup" id="Q9SRD4">
    <property type="interactions" value="417"/>
</dbReference>
<dbReference type="STRING" id="3702.Q9SRD4"/>
<dbReference type="MetOSite" id="Q9SRD4"/>
<dbReference type="PaxDb" id="3702-AT1G76790.1"/>
<dbReference type="ProteomicsDB" id="228882"/>
<dbReference type="EnsemblPlants" id="AT1G76790.1">
    <property type="protein sequence ID" value="AT1G76790.1"/>
    <property type="gene ID" value="AT1G76790"/>
</dbReference>
<dbReference type="GeneID" id="844013"/>
<dbReference type="Gramene" id="AT1G76790.1">
    <property type="protein sequence ID" value="AT1G76790.1"/>
    <property type="gene ID" value="AT1G76790"/>
</dbReference>
<dbReference type="KEGG" id="ath:AT1G76790"/>
<dbReference type="Araport" id="AT1G76790"/>
<dbReference type="TAIR" id="AT1G76790">
    <property type="gene designation" value="IGMT5"/>
</dbReference>
<dbReference type="eggNOG" id="KOG3178">
    <property type="taxonomic scope" value="Eukaryota"/>
</dbReference>
<dbReference type="HOGENOM" id="CLU_005533_12_1_1"/>
<dbReference type="InParanoid" id="Q9SRD4"/>
<dbReference type="OMA" id="DYLPSWH"/>
<dbReference type="OrthoDB" id="1606438at2759"/>
<dbReference type="PhylomeDB" id="Q9SRD4"/>
<dbReference type="BioCyc" id="ARA:AT1G76790-MONOMER"/>
<dbReference type="PRO" id="PR:Q9SRD4"/>
<dbReference type="Proteomes" id="UP000006548">
    <property type="component" value="Chromosome 1"/>
</dbReference>
<dbReference type="ExpressionAtlas" id="Q9SRD4">
    <property type="expression patterns" value="baseline and differential"/>
</dbReference>
<dbReference type="GO" id="GO:0008171">
    <property type="term" value="F:O-methyltransferase activity"/>
    <property type="evidence" value="ECO:0000315"/>
    <property type="project" value="TAIR"/>
</dbReference>
<dbReference type="GO" id="GO:0046983">
    <property type="term" value="F:protein dimerization activity"/>
    <property type="evidence" value="ECO:0007669"/>
    <property type="project" value="InterPro"/>
</dbReference>
<dbReference type="GO" id="GO:0009759">
    <property type="term" value="P:indole glucosinolate biosynthetic process"/>
    <property type="evidence" value="ECO:0000315"/>
    <property type="project" value="TAIR"/>
</dbReference>
<dbReference type="GO" id="GO:0032259">
    <property type="term" value="P:methylation"/>
    <property type="evidence" value="ECO:0007669"/>
    <property type="project" value="UniProtKB-KW"/>
</dbReference>
<dbReference type="FunFam" id="1.10.10.10:FF:000357">
    <property type="entry name" value="Caffeic acid 3-O-methyltransferase"/>
    <property type="match status" value="1"/>
</dbReference>
<dbReference type="FunFam" id="3.40.50.150:FF:000061">
    <property type="entry name" value="Caffeic acid O-methyltransferase"/>
    <property type="match status" value="1"/>
</dbReference>
<dbReference type="Gene3D" id="3.40.50.150">
    <property type="entry name" value="Vaccinia Virus protein VP39"/>
    <property type="match status" value="1"/>
</dbReference>
<dbReference type="Gene3D" id="1.10.10.10">
    <property type="entry name" value="Winged helix-like DNA-binding domain superfamily/Winged helix DNA-binding domain"/>
    <property type="match status" value="1"/>
</dbReference>
<dbReference type="InterPro" id="IPR016461">
    <property type="entry name" value="COMT-like"/>
</dbReference>
<dbReference type="InterPro" id="IPR001077">
    <property type="entry name" value="O_MeTrfase_dom"/>
</dbReference>
<dbReference type="InterPro" id="IPR012967">
    <property type="entry name" value="Plant_O-MeTrfase_dimerisation"/>
</dbReference>
<dbReference type="InterPro" id="IPR029063">
    <property type="entry name" value="SAM-dependent_MTases_sf"/>
</dbReference>
<dbReference type="InterPro" id="IPR036388">
    <property type="entry name" value="WH-like_DNA-bd_sf"/>
</dbReference>
<dbReference type="InterPro" id="IPR036390">
    <property type="entry name" value="WH_DNA-bd_sf"/>
</dbReference>
<dbReference type="PANTHER" id="PTHR11746">
    <property type="entry name" value="O-METHYLTRANSFERASE"/>
    <property type="match status" value="1"/>
</dbReference>
<dbReference type="Pfam" id="PF08100">
    <property type="entry name" value="Dimerisation"/>
    <property type="match status" value="1"/>
</dbReference>
<dbReference type="Pfam" id="PF00891">
    <property type="entry name" value="Methyltransf_2"/>
    <property type="match status" value="1"/>
</dbReference>
<dbReference type="PIRSF" id="PIRSF005739">
    <property type="entry name" value="O-mtase"/>
    <property type="match status" value="1"/>
</dbReference>
<dbReference type="SUPFAM" id="SSF53335">
    <property type="entry name" value="S-adenosyl-L-methionine-dependent methyltransferases"/>
    <property type="match status" value="1"/>
</dbReference>
<dbReference type="SUPFAM" id="SSF46785">
    <property type="entry name" value="Winged helix' DNA-binding domain"/>
    <property type="match status" value="1"/>
</dbReference>
<dbReference type="PROSITE" id="PS51683">
    <property type="entry name" value="SAM_OMT_II"/>
    <property type="match status" value="1"/>
</dbReference>
<feature type="chain" id="PRO_0000435499" description="Indole glucosinolate O-methyltransferase 5">
    <location>
        <begin position="1"/>
        <end position="367"/>
    </location>
</feature>
<feature type="active site" description="Proton acceptor" evidence="1 3">
    <location>
        <position position="270"/>
    </location>
</feature>
<feature type="binding site" evidence="1">
    <location>
        <position position="209"/>
    </location>
    <ligand>
        <name>S-adenosyl-L-homocysteine</name>
        <dbReference type="ChEBI" id="CHEBI:57856"/>
    </ligand>
</feature>
<feature type="binding site" evidence="1">
    <location>
        <position position="232"/>
    </location>
    <ligand>
        <name>S-adenosyl-L-homocysteine</name>
        <dbReference type="ChEBI" id="CHEBI:57856"/>
    </ligand>
</feature>
<feature type="binding site" evidence="1">
    <location>
        <position position="252"/>
    </location>
    <ligand>
        <name>S-adenosyl-L-homocysteine</name>
        <dbReference type="ChEBI" id="CHEBI:57856"/>
    </ligand>
</feature>
<feature type="binding site" evidence="1">
    <location>
        <position position="253"/>
    </location>
    <ligand>
        <name>S-adenosyl-L-homocysteine</name>
        <dbReference type="ChEBI" id="CHEBI:57856"/>
    </ligand>
</feature>
<feature type="binding site" evidence="1">
    <location>
        <position position="266"/>
    </location>
    <ligand>
        <name>S-adenosyl-L-homocysteine</name>
        <dbReference type="ChEBI" id="CHEBI:57856"/>
    </ligand>
</feature>
<feature type="sequence conflict" description="In Ref. 4; AAM66988." evidence="4" ref="4">
    <original>E</original>
    <variation>D</variation>
    <location>
        <position position="63"/>
    </location>
</feature>
<reference key="1">
    <citation type="journal article" date="2000" name="Nature">
        <title>Sequence and analysis of chromosome 1 of the plant Arabidopsis thaliana.</title>
        <authorList>
            <person name="Theologis A."/>
            <person name="Ecker J.R."/>
            <person name="Palm C.J."/>
            <person name="Federspiel N.A."/>
            <person name="Kaul S."/>
            <person name="White O."/>
            <person name="Alonso J."/>
            <person name="Altafi H."/>
            <person name="Araujo R."/>
            <person name="Bowman C.L."/>
            <person name="Brooks S.Y."/>
            <person name="Buehler E."/>
            <person name="Chan A."/>
            <person name="Chao Q."/>
            <person name="Chen H."/>
            <person name="Cheuk R.F."/>
            <person name="Chin C.W."/>
            <person name="Chung M.K."/>
            <person name="Conn L."/>
            <person name="Conway A.B."/>
            <person name="Conway A.R."/>
            <person name="Creasy T.H."/>
            <person name="Dewar K."/>
            <person name="Dunn P."/>
            <person name="Etgu P."/>
            <person name="Feldblyum T.V."/>
            <person name="Feng J.-D."/>
            <person name="Fong B."/>
            <person name="Fujii C.Y."/>
            <person name="Gill J.E."/>
            <person name="Goldsmith A.D."/>
            <person name="Haas B."/>
            <person name="Hansen N.F."/>
            <person name="Hughes B."/>
            <person name="Huizar L."/>
            <person name="Hunter J.L."/>
            <person name="Jenkins J."/>
            <person name="Johnson-Hopson C."/>
            <person name="Khan S."/>
            <person name="Khaykin E."/>
            <person name="Kim C.J."/>
            <person name="Koo H.L."/>
            <person name="Kremenetskaia I."/>
            <person name="Kurtz D.B."/>
            <person name="Kwan A."/>
            <person name="Lam B."/>
            <person name="Langin-Hooper S."/>
            <person name="Lee A."/>
            <person name="Lee J.M."/>
            <person name="Lenz C.A."/>
            <person name="Li J.H."/>
            <person name="Li Y.-P."/>
            <person name="Lin X."/>
            <person name="Liu S.X."/>
            <person name="Liu Z.A."/>
            <person name="Luros J.S."/>
            <person name="Maiti R."/>
            <person name="Marziali A."/>
            <person name="Militscher J."/>
            <person name="Miranda M."/>
            <person name="Nguyen M."/>
            <person name="Nierman W.C."/>
            <person name="Osborne B.I."/>
            <person name="Pai G."/>
            <person name="Peterson J."/>
            <person name="Pham P.K."/>
            <person name="Rizzo M."/>
            <person name="Rooney T."/>
            <person name="Rowley D."/>
            <person name="Sakano H."/>
            <person name="Salzberg S.L."/>
            <person name="Schwartz J.R."/>
            <person name="Shinn P."/>
            <person name="Southwick A.M."/>
            <person name="Sun H."/>
            <person name="Tallon L.J."/>
            <person name="Tambunga G."/>
            <person name="Toriumi M.J."/>
            <person name="Town C.D."/>
            <person name="Utterback T."/>
            <person name="Van Aken S."/>
            <person name="Vaysberg M."/>
            <person name="Vysotskaia V.S."/>
            <person name="Walker M."/>
            <person name="Wu D."/>
            <person name="Yu G."/>
            <person name="Fraser C.M."/>
            <person name="Venter J.C."/>
            <person name="Davis R.W."/>
        </authorList>
    </citation>
    <scope>NUCLEOTIDE SEQUENCE [LARGE SCALE GENOMIC DNA]</scope>
    <source>
        <strain>cv. Columbia</strain>
    </source>
</reference>
<reference key="2">
    <citation type="journal article" date="2017" name="Plant J.">
        <title>Araport11: a complete reannotation of the Arabidopsis thaliana reference genome.</title>
        <authorList>
            <person name="Cheng C.Y."/>
            <person name="Krishnakumar V."/>
            <person name="Chan A.P."/>
            <person name="Thibaud-Nissen F."/>
            <person name="Schobel S."/>
            <person name="Town C.D."/>
        </authorList>
    </citation>
    <scope>GENOME REANNOTATION</scope>
    <source>
        <strain>cv. Columbia</strain>
    </source>
</reference>
<reference key="3">
    <citation type="journal article" date="2003" name="Science">
        <title>Empirical analysis of transcriptional activity in the Arabidopsis genome.</title>
        <authorList>
            <person name="Yamada K."/>
            <person name="Lim J."/>
            <person name="Dale J.M."/>
            <person name="Chen H."/>
            <person name="Shinn P."/>
            <person name="Palm C.J."/>
            <person name="Southwick A.M."/>
            <person name="Wu H.C."/>
            <person name="Kim C.J."/>
            <person name="Nguyen M."/>
            <person name="Pham P.K."/>
            <person name="Cheuk R.F."/>
            <person name="Karlin-Newmann G."/>
            <person name="Liu S.X."/>
            <person name="Lam B."/>
            <person name="Sakano H."/>
            <person name="Wu T."/>
            <person name="Yu G."/>
            <person name="Miranda M."/>
            <person name="Quach H.L."/>
            <person name="Tripp M."/>
            <person name="Chang C.H."/>
            <person name="Lee J.M."/>
            <person name="Toriumi M.J."/>
            <person name="Chan M.M."/>
            <person name="Tang C.C."/>
            <person name="Onodera C.S."/>
            <person name="Deng J.M."/>
            <person name="Akiyama K."/>
            <person name="Ansari Y."/>
            <person name="Arakawa T."/>
            <person name="Banh J."/>
            <person name="Banno F."/>
            <person name="Bowser L."/>
            <person name="Brooks S.Y."/>
            <person name="Carninci P."/>
            <person name="Chao Q."/>
            <person name="Choy N."/>
            <person name="Enju A."/>
            <person name="Goldsmith A.D."/>
            <person name="Gurjal M."/>
            <person name="Hansen N.F."/>
            <person name="Hayashizaki Y."/>
            <person name="Johnson-Hopson C."/>
            <person name="Hsuan V.W."/>
            <person name="Iida K."/>
            <person name="Karnes M."/>
            <person name="Khan S."/>
            <person name="Koesema E."/>
            <person name="Ishida J."/>
            <person name="Jiang P.X."/>
            <person name="Jones T."/>
            <person name="Kawai J."/>
            <person name="Kamiya A."/>
            <person name="Meyers C."/>
            <person name="Nakajima M."/>
            <person name="Narusaka M."/>
            <person name="Seki M."/>
            <person name="Sakurai T."/>
            <person name="Satou M."/>
            <person name="Tamse R."/>
            <person name="Vaysberg M."/>
            <person name="Wallender E.K."/>
            <person name="Wong C."/>
            <person name="Yamamura Y."/>
            <person name="Yuan S."/>
            <person name="Shinozaki K."/>
            <person name="Davis R.W."/>
            <person name="Theologis A."/>
            <person name="Ecker J.R."/>
        </authorList>
    </citation>
    <scope>NUCLEOTIDE SEQUENCE [LARGE SCALE MRNA]</scope>
    <source>
        <strain>cv. Columbia</strain>
    </source>
</reference>
<reference key="4">
    <citation type="submission" date="2002-03" db="EMBL/GenBank/DDBJ databases">
        <title>Full-length cDNA from Arabidopsis thaliana.</title>
        <authorList>
            <person name="Brover V.V."/>
            <person name="Troukhan M.E."/>
            <person name="Alexandrov N.A."/>
            <person name="Lu Y.-P."/>
            <person name="Flavell R.B."/>
            <person name="Feldmann K.A."/>
        </authorList>
    </citation>
    <scope>NUCLEOTIDE SEQUENCE [LARGE SCALE MRNA]</scope>
</reference>
<protein>
    <recommendedName>
        <fullName evidence="4">Indole glucosinolate O-methyltransferase 5</fullName>
        <ecNumber evidence="4">2.1.1.-</ecNumber>
    </recommendedName>
</protein>
<evidence type="ECO:0000250" key="1">
    <source>
        <dbReference type="UniProtKB" id="P28002"/>
    </source>
</evidence>
<evidence type="ECO:0000250" key="2">
    <source>
        <dbReference type="UniProtKB" id="Q9LPU5"/>
    </source>
</evidence>
<evidence type="ECO:0000255" key="3">
    <source>
        <dbReference type="PROSITE-ProRule" id="PRU01020"/>
    </source>
</evidence>
<evidence type="ECO:0000305" key="4"/>
<evidence type="ECO:0000312" key="5">
    <source>
        <dbReference type="Araport" id="AT1G76790"/>
    </source>
</evidence>
<evidence type="ECO:0000312" key="6">
    <source>
        <dbReference type="EMBL" id="AAF04440.1"/>
    </source>
</evidence>